<reference key="1">
    <citation type="submission" date="2004-05" db="EMBL/GenBank/DDBJ databases">
        <authorList>
            <consortium name="NIH - Zebrafish Gene Collection (ZGC) project"/>
        </authorList>
    </citation>
    <scope>NUCLEOTIDE SEQUENCE [LARGE SCALE MRNA]</scope>
    <source>
        <tissue>Kidney</tissue>
    </source>
</reference>
<sequence length="196" mass="21471">MAAPGPGEYFSVGSHVSCLTCLGQRLQGEVVAFDYPSKMLTLKCAPSSGKPNLSDVMLVNLAYVSEVDIITDRAETPPPLASLNFNKLVNRARAEKEDKLSLAYAVSAGVSVEGQQLFQTIHKTIKECKWQEKNIIVMDDVVISPPYQVDNCKGKEGSALSHVRKIVEKHFRDVESQISVQHSQQAQHTQDSALSS</sequence>
<name>LS12B_DANRE</name>
<organism>
    <name type="scientific">Danio rerio</name>
    <name type="common">Zebrafish</name>
    <name type="synonym">Brachydanio rerio</name>
    <dbReference type="NCBI Taxonomy" id="7955"/>
    <lineage>
        <taxon>Eukaryota</taxon>
        <taxon>Metazoa</taxon>
        <taxon>Chordata</taxon>
        <taxon>Craniata</taxon>
        <taxon>Vertebrata</taxon>
        <taxon>Euteleostomi</taxon>
        <taxon>Actinopterygii</taxon>
        <taxon>Neopterygii</taxon>
        <taxon>Teleostei</taxon>
        <taxon>Ostariophysi</taxon>
        <taxon>Cypriniformes</taxon>
        <taxon>Danionidae</taxon>
        <taxon>Danioninae</taxon>
        <taxon>Danio</taxon>
    </lineage>
</organism>
<gene>
    <name type="primary">lsm12b</name>
    <name type="ORF">zgc:85812</name>
</gene>
<dbReference type="EMBL" id="BC070015">
    <property type="protein sequence ID" value="AAH70015.1"/>
    <property type="molecule type" value="mRNA"/>
</dbReference>
<dbReference type="RefSeq" id="NP_999982.1">
    <property type="nucleotide sequence ID" value="NM_214817.1"/>
</dbReference>
<dbReference type="FunCoup" id="Q6NSN1">
    <property type="interactions" value="738"/>
</dbReference>
<dbReference type="STRING" id="7955.ENSDARP00000043189"/>
<dbReference type="PaxDb" id="7955-ENSDARP00000043189"/>
<dbReference type="Ensembl" id="ENSDART00000043190">
    <property type="protein sequence ID" value="ENSDARP00000043189"/>
    <property type="gene ID" value="ENSDARG00000028848"/>
</dbReference>
<dbReference type="Ensembl" id="ENSDART00000192333">
    <property type="protein sequence ID" value="ENSDARP00000155311"/>
    <property type="gene ID" value="ENSDARG00000115800"/>
</dbReference>
<dbReference type="GeneID" id="407986"/>
<dbReference type="KEGG" id="dre:407986"/>
<dbReference type="AGR" id="ZFIN:ZDB-GENE-040516-12"/>
<dbReference type="CTD" id="407986"/>
<dbReference type="ZFIN" id="ZDB-GENE-040516-12">
    <property type="gene designation" value="lsm12a"/>
</dbReference>
<dbReference type="eggNOG" id="KOG4401">
    <property type="taxonomic scope" value="Eukaryota"/>
</dbReference>
<dbReference type="HOGENOM" id="CLU_073383_3_0_1"/>
<dbReference type="InParanoid" id="Q6NSN1"/>
<dbReference type="OMA" id="FDYHTKM"/>
<dbReference type="OrthoDB" id="1057137at2759"/>
<dbReference type="PhylomeDB" id="Q6NSN1"/>
<dbReference type="TreeFam" id="TF324296"/>
<dbReference type="PRO" id="PR:Q6NSN1"/>
<dbReference type="Proteomes" id="UP000000437">
    <property type="component" value="Alternate scaffold 3"/>
</dbReference>
<dbReference type="Proteomes" id="UP000000437">
    <property type="component" value="Chromosome 3"/>
</dbReference>
<dbReference type="Bgee" id="ENSDARG00000028848">
    <property type="expression patterns" value="Expressed in early embryo and 29 other cell types or tissues"/>
</dbReference>
<dbReference type="ExpressionAtlas" id="Q6NSN1">
    <property type="expression patterns" value="baseline"/>
</dbReference>
<dbReference type="GO" id="GO:0003723">
    <property type="term" value="F:RNA binding"/>
    <property type="evidence" value="ECO:0007669"/>
    <property type="project" value="InterPro"/>
</dbReference>
<dbReference type="CDD" id="cd01735">
    <property type="entry name" value="LSm12_N"/>
    <property type="match status" value="1"/>
</dbReference>
<dbReference type="InterPro" id="IPR047574">
    <property type="entry name" value="AD"/>
</dbReference>
<dbReference type="InterPro" id="IPR039683">
    <property type="entry name" value="Lsm12-like"/>
</dbReference>
<dbReference type="InterPro" id="IPR019181">
    <property type="entry name" value="LSM12_ABD"/>
</dbReference>
<dbReference type="InterPro" id="IPR048478">
    <property type="entry name" value="LSM12_LSM"/>
</dbReference>
<dbReference type="InterPro" id="IPR047575">
    <property type="entry name" value="Sm"/>
</dbReference>
<dbReference type="PANTHER" id="PTHR13542">
    <property type="entry name" value="LSM12 HOMOLOG"/>
    <property type="match status" value="1"/>
</dbReference>
<dbReference type="Pfam" id="PF09793">
    <property type="entry name" value="AD"/>
    <property type="match status" value="1"/>
</dbReference>
<dbReference type="Pfam" id="PF21166">
    <property type="entry name" value="LSM12_LSM"/>
    <property type="match status" value="1"/>
</dbReference>
<dbReference type="SMART" id="SM00995">
    <property type="entry name" value="AD"/>
    <property type="match status" value="1"/>
</dbReference>
<dbReference type="PROSITE" id="PS52001">
    <property type="entry name" value="AD"/>
    <property type="match status" value="1"/>
</dbReference>
<dbReference type="PROSITE" id="PS52002">
    <property type="entry name" value="SM"/>
    <property type="match status" value="1"/>
</dbReference>
<protein>
    <recommendedName>
        <fullName>Protein LSM12 homolog B</fullName>
    </recommendedName>
</protein>
<evidence type="ECO:0000255" key="1">
    <source>
        <dbReference type="PROSITE-ProRule" id="PRU01345"/>
    </source>
</evidence>
<evidence type="ECO:0000255" key="2">
    <source>
        <dbReference type="PROSITE-ProRule" id="PRU01346"/>
    </source>
</evidence>
<evidence type="ECO:0000305" key="3"/>
<proteinExistence type="evidence at transcript level"/>
<feature type="chain" id="PRO_0000305131" description="Protein LSM12 homolog B">
    <location>
        <begin position="1"/>
        <end position="196"/>
    </location>
</feature>
<feature type="domain" description="Sm" evidence="2">
    <location>
        <begin position="3"/>
        <end position="70"/>
    </location>
</feature>
<feature type="domain" description="AD" evidence="1">
    <location>
        <begin position="81"/>
        <end position="175"/>
    </location>
</feature>
<accession>Q6NSN1</accession>
<keyword id="KW-1185">Reference proteome</keyword>
<comment type="similarity">
    <text evidence="3">Belongs to the LSM12 family.</text>
</comment>